<organism>
    <name type="scientific">Saccharophagus degradans (strain 2-40 / ATCC 43961 / DSM 17024)</name>
    <dbReference type="NCBI Taxonomy" id="203122"/>
    <lineage>
        <taxon>Bacteria</taxon>
        <taxon>Pseudomonadati</taxon>
        <taxon>Pseudomonadota</taxon>
        <taxon>Gammaproteobacteria</taxon>
        <taxon>Cellvibrionales</taxon>
        <taxon>Cellvibrionaceae</taxon>
        <taxon>Saccharophagus</taxon>
    </lineage>
</organism>
<reference key="1">
    <citation type="journal article" date="2008" name="PLoS Genet.">
        <title>Complete genome sequence of the complex carbohydrate-degrading marine bacterium, Saccharophagus degradans strain 2-40 T.</title>
        <authorList>
            <person name="Weiner R.M."/>
            <person name="Taylor L.E. II"/>
            <person name="Henrissat B."/>
            <person name="Hauser L."/>
            <person name="Land M."/>
            <person name="Coutinho P.M."/>
            <person name="Rancurel C."/>
            <person name="Saunders E.H."/>
            <person name="Longmire A.G."/>
            <person name="Zhang H."/>
            <person name="Bayer E.A."/>
            <person name="Gilbert H.J."/>
            <person name="Larimer F."/>
            <person name="Zhulin I.B."/>
            <person name="Ekborg N.A."/>
            <person name="Lamed R."/>
            <person name="Richardson P.M."/>
            <person name="Borovok I."/>
            <person name="Hutcheson S."/>
        </authorList>
    </citation>
    <scope>NUCLEOTIDE SEQUENCE [LARGE SCALE GENOMIC DNA]</scope>
    <source>
        <strain>2-40 / ATCC 43961 / DSM 17024</strain>
    </source>
</reference>
<proteinExistence type="inferred from homology"/>
<gene>
    <name evidence="1" type="primary">ftsB</name>
    <name type="ordered locus">Sde_1246</name>
</gene>
<accession>Q21LC1</accession>
<sequence>MKWLAIILVVALLALQYRLWMGEGSIASVVSLNREIAKQKEENARLRERNRLLAAEVDALKQGKDAIEERARNDMGMIKEGETFFMIVDETDKDTKKNKK</sequence>
<feature type="chain" id="PRO_1000025719" description="Cell division protein FtsB">
    <location>
        <begin position="1"/>
        <end position="100"/>
    </location>
</feature>
<feature type="topological domain" description="Cytoplasmic" evidence="1">
    <location>
        <begin position="1"/>
        <end position="3"/>
    </location>
</feature>
<feature type="transmembrane region" description="Helical" evidence="1">
    <location>
        <begin position="4"/>
        <end position="21"/>
    </location>
</feature>
<feature type="topological domain" description="Periplasmic" evidence="1">
    <location>
        <begin position="22"/>
        <end position="100"/>
    </location>
</feature>
<feature type="coiled-coil region" evidence="1">
    <location>
        <begin position="26"/>
        <end position="73"/>
    </location>
</feature>
<dbReference type="EMBL" id="CP000282">
    <property type="protein sequence ID" value="ABD80508.1"/>
    <property type="molecule type" value="Genomic_DNA"/>
</dbReference>
<dbReference type="RefSeq" id="WP_011467728.1">
    <property type="nucleotide sequence ID" value="NC_007912.1"/>
</dbReference>
<dbReference type="SMR" id="Q21LC1"/>
<dbReference type="STRING" id="203122.Sde_1246"/>
<dbReference type="GeneID" id="98612923"/>
<dbReference type="KEGG" id="sde:Sde_1246"/>
<dbReference type="eggNOG" id="COG2919">
    <property type="taxonomic scope" value="Bacteria"/>
</dbReference>
<dbReference type="HOGENOM" id="CLU_134863_5_1_6"/>
<dbReference type="OrthoDB" id="7061211at2"/>
<dbReference type="Proteomes" id="UP000001947">
    <property type="component" value="Chromosome"/>
</dbReference>
<dbReference type="GO" id="GO:0032153">
    <property type="term" value="C:cell division site"/>
    <property type="evidence" value="ECO:0007669"/>
    <property type="project" value="UniProtKB-UniRule"/>
</dbReference>
<dbReference type="GO" id="GO:0030428">
    <property type="term" value="C:cell septum"/>
    <property type="evidence" value="ECO:0007669"/>
    <property type="project" value="TreeGrafter"/>
</dbReference>
<dbReference type="GO" id="GO:0005886">
    <property type="term" value="C:plasma membrane"/>
    <property type="evidence" value="ECO:0007669"/>
    <property type="project" value="UniProtKB-SubCell"/>
</dbReference>
<dbReference type="GO" id="GO:0043093">
    <property type="term" value="P:FtsZ-dependent cytokinesis"/>
    <property type="evidence" value="ECO:0007669"/>
    <property type="project" value="UniProtKB-UniRule"/>
</dbReference>
<dbReference type="HAMAP" id="MF_00599">
    <property type="entry name" value="FtsB"/>
    <property type="match status" value="1"/>
</dbReference>
<dbReference type="InterPro" id="IPR023081">
    <property type="entry name" value="Cell_div_FtsB"/>
</dbReference>
<dbReference type="InterPro" id="IPR007060">
    <property type="entry name" value="FtsL/DivIC"/>
</dbReference>
<dbReference type="NCBIfam" id="NF002058">
    <property type="entry name" value="PRK00888.1"/>
    <property type="match status" value="1"/>
</dbReference>
<dbReference type="PANTHER" id="PTHR37485">
    <property type="entry name" value="CELL DIVISION PROTEIN FTSB"/>
    <property type="match status" value="1"/>
</dbReference>
<dbReference type="PANTHER" id="PTHR37485:SF1">
    <property type="entry name" value="CELL DIVISION PROTEIN FTSB"/>
    <property type="match status" value="1"/>
</dbReference>
<dbReference type="Pfam" id="PF04977">
    <property type="entry name" value="DivIC"/>
    <property type="match status" value="1"/>
</dbReference>
<protein>
    <recommendedName>
        <fullName evidence="1">Cell division protein FtsB</fullName>
    </recommendedName>
</protein>
<comment type="function">
    <text evidence="1">Essential cell division protein. May link together the upstream cell division proteins, which are predominantly cytoplasmic, with the downstream cell division proteins, which are predominantly periplasmic.</text>
</comment>
<comment type="subunit">
    <text evidence="1">Part of a complex composed of FtsB, FtsL and FtsQ.</text>
</comment>
<comment type="subcellular location">
    <subcellularLocation>
        <location evidence="1">Cell inner membrane</location>
        <topology evidence="1">Single-pass type II membrane protein</topology>
    </subcellularLocation>
    <text evidence="1">Localizes to the division septum.</text>
</comment>
<comment type="similarity">
    <text evidence="1">Belongs to the FtsB family.</text>
</comment>
<keyword id="KW-0131">Cell cycle</keyword>
<keyword id="KW-0132">Cell division</keyword>
<keyword id="KW-0997">Cell inner membrane</keyword>
<keyword id="KW-1003">Cell membrane</keyword>
<keyword id="KW-0175">Coiled coil</keyword>
<keyword id="KW-0472">Membrane</keyword>
<keyword id="KW-1185">Reference proteome</keyword>
<keyword id="KW-0812">Transmembrane</keyword>
<keyword id="KW-1133">Transmembrane helix</keyword>
<name>FTSB_SACD2</name>
<evidence type="ECO:0000255" key="1">
    <source>
        <dbReference type="HAMAP-Rule" id="MF_00599"/>
    </source>
</evidence>